<organism>
    <name type="scientific">Pseudomonas syringae pv. tomato (strain ATCC BAA-871 / DC3000)</name>
    <dbReference type="NCBI Taxonomy" id="223283"/>
    <lineage>
        <taxon>Bacteria</taxon>
        <taxon>Pseudomonadati</taxon>
        <taxon>Pseudomonadota</taxon>
        <taxon>Gammaproteobacteria</taxon>
        <taxon>Pseudomonadales</taxon>
        <taxon>Pseudomonadaceae</taxon>
        <taxon>Pseudomonas</taxon>
    </lineage>
</organism>
<protein>
    <recommendedName>
        <fullName evidence="1">LPS-assembly protein LptD</fullName>
    </recommendedName>
</protein>
<name>LPTD_PSESM</name>
<evidence type="ECO:0000255" key="1">
    <source>
        <dbReference type="HAMAP-Rule" id="MF_01411"/>
    </source>
</evidence>
<evidence type="ECO:0000256" key="2">
    <source>
        <dbReference type="SAM" id="MobiDB-lite"/>
    </source>
</evidence>
<evidence type="ECO:0000305" key="3"/>
<reference key="1">
    <citation type="journal article" date="2003" name="Proc. Natl. Acad. Sci. U.S.A.">
        <title>The complete genome sequence of the Arabidopsis and tomato pathogen Pseudomonas syringae pv. tomato DC3000.</title>
        <authorList>
            <person name="Buell C.R."/>
            <person name="Joardar V."/>
            <person name="Lindeberg M."/>
            <person name="Selengut J."/>
            <person name="Paulsen I.T."/>
            <person name="Gwinn M.L."/>
            <person name="Dodson R.J."/>
            <person name="DeBoy R.T."/>
            <person name="Durkin A.S."/>
            <person name="Kolonay J.F."/>
            <person name="Madupu R."/>
            <person name="Daugherty S.C."/>
            <person name="Brinkac L.M."/>
            <person name="Beanan M.J."/>
            <person name="Haft D.H."/>
            <person name="Nelson W.C."/>
            <person name="Davidsen T.M."/>
            <person name="Zafar N."/>
            <person name="Zhou L."/>
            <person name="Liu J."/>
            <person name="Yuan Q."/>
            <person name="Khouri H.M."/>
            <person name="Fedorova N.B."/>
            <person name="Tran B."/>
            <person name="Russell D."/>
            <person name="Berry K.J."/>
            <person name="Utterback T.R."/>
            <person name="Van Aken S.E."/>
            <person name="Feldblyum T.V."/>
            <person name="D'Ascenzo M."/>
            <person name="Deng W.-L."/>
            <person name="Ramos A.R."/>
            <person name="Alfano J.R."/>
            <person name="Cartinhour S."/>
            <person name="Chatterjee A.K."/>
            <person name="Delaney T.P."/>
            <person name="Lazarowitz S.G."/>
            <person name="Martin G.B."/>
            <person name="Schneider D.J."/>
            <person name="Tang X."/>
            <person name="Bender C.L."/>
            <person name="White O."/>
            <person name="Fraser C.M."/>
            <person name="Collmer A."/>
        </authorList>
    </citation>
    <scope>NUCLEOTIDE SEQUENCE [LARGE SCALE GENOMIC DNA]</scope>
    <source>
        <strain>ATCC BAA-871 / DC3000</strain>
    </source>
</reference>
<dbReference type="EMBL" id="AE016853">
    <property type="protein sequence ID" value="AAO54096.1"/>
    <property type="status" value="ALT_INIT"/>
    <property type="molecule type" value="Genomic_DNA"/>
</dbReference>
<dbReference type="RefSeq" id="NP_790401.1">
    <property type="nucleotide sequence ID" value="NC_004578.1"/>
</dbReference>
<dbReference type="RefSeq" id="WP_046463957.1">
    <property type="nucleotide sequence ID" value="NC_004578.1"/>
</dbReference>
<dbReference type="SMR" id="Q88A43"/>
<dbReference type="STRING" id="223283.PSPTO_0554"/>
<dbReference type="GeneID" id="1182164"/>
<dbReference type="KEGG" id="pst:PSPTO_0554"/>
<dbReference type="PATRIC" id="fig|223283.9.peg.564"/>
<dbReference type="eggNOG" id="COG1452">
    <property type="taxonomic scope" value="Bacteria"/>
</dbReference>
<dbReference type="HOGENOM" id="CLU_009039_1_0_6"/>
<dbReference type="OrthoDB" id="9760225at2"/>
<dbReference type="Proteomes" id="UP000002515">
    <property type="component" value="Chromosome"/>
</dbReference>
<dbReference type="GO" id="GO:0009279">
    <property type="term" value="C:cell outer membrane"/>
    <property type="evidence" value="ECO:0007669"/>
    <property type="project" value="UniProtKB-SubCell"/>
</dbReference>
<dbReference type="GO" id="GO:1990351">
    <property type="term" value="C:transporter complex"/>
    <property type="evidence" value="ECO:0007669"/>
    <property type="project" value="TreeGrafter"/>
</dbReference>
<dbReference type="GO" id="GO:0043165">
    <property type="term" value="P:Gram-negative-bacterium-type cell outer membrane assembly"/>
    <property type="evidence" value="ECO:0007669"/>
    <property type="project" value="UniProtKB-UniRule"/>
</dbReference>
<dbReference type="GO" id="GO:0015920">
    <property type="term" value="P:lipopolysaccharide transport"/>
    <property type="evidence" value="ECO:0007669"/>
    <property type="project" value="InterPro"/>
</dbReference>
<dbReference type="Gene3D" id="2.60.450.10">
    <property type="entry name" value="Lipopolysaccharide (LPS) transport protein A like domain"/>
    <property type="match status" value="1"/>
</dbReference>
<dbReference type="HAMAP" id="MF_01411">
    <property type="entry name" value="LPS_assembly_LptD"/>
    <property type="match status" value="1"/>
</dbReference>
<dbReference type="InterPro" id="IPR020889">
    <property type="entry name" value="LipoPS_assembly_LptD"/>
</dbReference>
<dbReference type="InterPro" id="IPR050218">
    <property type="entry name" value="LptD"/>
</dbReference>
<dbReference type="InterPro" id="IPR007543">
    <property type="entry name" value="LptD_C"/>
</dbReference>
<dbReference type="InterPro" id="IPR005653">
    <property type="entry name" value="OstA-like_N"/>
</dbReference>
<dbReference type="PANTHER" id="PTHR30189">
    <property type="entry name" value="LPS-ASSEMBLY PROTEIN"/>
    <property type="match status" value="1"/>
</dbReference>
<dbReference type="PANTHER" id="PTHR30189:SF1">
    <property type="entry name" value="LPS-ASSEMBLY PROTEIN LPTD"/>
    <property type="match status" value="1"/>
</dbReference>
<dbReference type="Pfam" id="PF04453">
    <property type="entry name" value="LptD"/>
    <property type="match status" value="1"/>
</dbReference>
<dbReference type="Pfam" id="PF03968">
    <property type="entry name" value="LptD_N"/>
    <property type="match status" value="1"/>
</dbReference>
<comment type="function">
    <text evidence="1">Together with LptE, is involved in the assembly of lipopolysaccharide (LPS) at the surface of the outer membrane.</text>
</comment>
<comment type="subunit">
    <text evidence="1">Component of the lipopolysaccharide transport and assembly complex. Interacts with LptE and LptA.</text>
</comment>
<comment type="subcellular location">
    <subcellularLocation>
        <location evidence="1">Cell outer membrane</location>
    </subcellularLocation>
</comment>
<comment type="similarity">
    <text evidence="1">Belongs to the LptD family.</text>
</comment>
<comment type="sequence caution" evidence="3">
    <conflict type="erroneous initiation">
        <sequence resource="EMBL-CDS" id="AAO54096"/>
    </conflict>
</comment>
<proteinExistence type="inferred from homology"/>
<gene>
    <name evidence="1" type="primary">lptD</name>
    <name type="synonym">imp</name>
    <name type="synonym">ostA</name>
    <name type="ordered locus">PSPTO_0554</name>
</gene>
<feature type="signal peptide" evidence="1">
    <location>
        <begin position="1"/>
        <end position="22"/>
    </location>
</feature>
<feature type="chain" id="PRO_0000281628" description="LPS-assembly protein LptD">
    <location>
        <begin position="23"/>
        <end position="927"/>
    </location>
</feature>
<feature type="region of interest" description="Disordered" evidence="2">
    <location>
        <begin position="60"/>
        <end position="100"/>
    </location>
</feature>
<feature type="compositionally biased region" description="Low complexity" evidence="2">
    <location>
        <begin position="70"/>
        <end position="86"/>
    </location>
</feature>
<sequence length="927" mass="104556">MALKSPAFRKKFPLLVTGSLLAMQPLATQFVVAAEQYDCSVSASGAWNCAPKSTAAAVELPPRPVHSTASVSSNGTVTSESSSSGEQVAGPQLVTEAKGKGLKSRSADYSHLDWVPREKLTAAQLAETGPYCSGAYVEPIRPGMDDKTPMKDAPMFVGAKASRYEQEAQVATLAGDVVLRQGSMQVQAQEAALHQAENRGELNGDVRLRDNGALIVGDKAELQLDTGEARVDNAEYVLHKSNIRGNALYAKRAENAIIRLKDGTYTTCEPNSNAWTLKGNNITLNPATGFGTATNVTLRVKDIPVLYTPYIYFPIDDRRQSGFLPPTIAAGGDNGFTLVTPYYFNLAPNYDATLYPRYMADRGLLMEGEFRYLTKGSEGQFGGAYLNDENDDRKLQSDYDKTRWMINWHHKGGLDTRWLTQVDYTDISDPYYFQDLETDQIGVKRTDFLNQQGSLTYRGDSYSAVFNAQAYKLATVANVTPYNRLPQLTLNGTLPYNPEGLKFDYQTEAVRFDRDLRTGTFVDENGNFESRLDNNISGLDRANGDRLNLAPSVSLPMNWSYGFLTPKVKYVYTQYDLSLDGTGKSQLAASGGTFDSSVNRSVPIFSVDSGLYFDRNTNWFGKDYRQTLEPRLFYLYVPEKDQTDIPAFDTSESTFSYSSLFRDNRFTGSDRIGDENKLSLGITNRWIEDNGFERQRFAIGQAIYFSDRKVQLPGVSFADRDDAKANVSPYALEYEYRFNRDWRFNSDFNWDPDSKSTRSGSAMFHYQPEAEPNKIVNFGYRYRNDQIRYDESTGRWIVGGGDYGRPGDPNYVKDYYKIQQHDFSVIWPIVPQWSLISRWQYDYNRERTIEAFGGFEYDNCCWKMRLVNRYWIDYDEFSQAAPQNEKGDRGIFLQIVLKGLGGVTGAKVDSFLDKGIQGYREREDQAF</sequence>
<accession>Q88A43</accession>
<keyword id="KW-0998">Cell outer membrane</keyword>
<keyword id="KW-0472">Membrane</keyword>
<keyword id="KW-1185">Reference proteome</keyword>
<keyword id="KW-0732">Signal</keyword>